<protein>
    <recommendedName>
        <fullName>Protein YciN</fullName>
    </recommendedName>
</protein>
<accession>P0AB61</accession>
<accession>P46132</accession>
<accession>P77447</accession>
<reference key="1">
    <citation type="journal article" date="1986" name="J. Mol. Biol.">
        <title>Complete nucleotide sequence of the topA gene encoding Escherichia coli DNA topoisomerase I.</title>
        <authorList>
            <person name="Tse-Dinh Y.-C."/>
            <person name="Wang J.C."/>
        </authorList>
    </citation>
    <scope>NUCLEOTIDE SEQUENCE [GENOMIC DNA]</scope>
</reference>
<reference key="2">
    <citation type="journal article" date="1996" name="DNA Res.">
        <title>A 570-kb DNA sequence of the Escherichia coli K-12 genome corresponding to the 28.0-40.1 min region on the linkage map.</title>
        <authorList>
            <person name="Aiba H."/>
            <person name="Baba T."/>
            <person name="Fujita K."/>
            <person name="Hayashi K."/>
            <person name="Inada T."/>
            <person name="Isono K."/>
            <person name="Itoh T."/>
            <person name="Kasai H."/>
            <person name="Kashimoto K."/>
            <person name="Kimura S."/>
            <person name="Kitakawa M."/>
            <person name="Kitagawa M."/>
            <person name="Makino K."/>
            <person name="Miki T."/>
            <person name="Mizobuchi K."/>
            <person name="Mori H."/>
            <person name="Mori T."/>
            <person name="Motomura K."/>
            <person name="Nakade S."/>
            <person name="Nakamura Y."/>
            <person name="Nashimoto H."/>
            <person name="Nishio Y."/>
            <person name="Oshima T."/>
            <person name="Saito N."/>
            <person name="Sampei G."/>
            <person name="Seki Y."/>
            <person name="Sivasundaram S."/>
            <person name="Tagami H."/>
            <person name="Takeda J."/>
            <person name="Takemoto K."/>
            <person name="Takeuchi Y."/>
            <person name="Wada C."/>
            <person name="Yamamoto Y."/>
            <person name="Horiuchi T."/>
        </authorList>
    </citation>
    <scope>NUCLEOTIDE SEQUENCE [LARGE SCALE GENOMIC DNA]</scope>
    <source>
        <strain>K12 / W3110 / ATCC 27325 / DSM 5911</strain>
    </source>
</reference>
<reference key="3">
    <citation type="journal article" date="1997" name="Science">
        <title>The complete genome sequence of Escherichia coli K-12.</title>
        <authorList>
            <person name="Blattner F.R."/>
            <person name="Plunkett G. III"/>
            <person name="Bloch C.A."/>
            <person name="Perna N.T."/>
            <person name="Burland V."/>
            <person name="Riley M."/>
            <person name="Collado-Vides J."/>
            <person name="Glasner J.D."/>
            <person name="Rode C.K."/>
            <person name="Mayhew G.F."/>
            <person name="Gregor J."/>
            <person name="Davis N.W."/>
            <person name="Kirkpatrick H.A."/>
            <person name="Goeden M.A."/>
            <person name="Rose D.J."/>
            <person name="Mau B."/>
            <person name="Shao Y."/>
        </authorList>
    </citation>
    <scope>NUCLEOTIDE SEQUENCE [LARGE SCALE GENOMIC DNA]</scope>
    <source>
        <strain>K12 / MG1655 / ATCC 47076</strain>
    </source>
</reference>
<reference key="4">
    <citation type="journal article" date="2006" name="Mol. Syst. Biol.">
        <title>Highly accurate genome sequences of Escherichia coli K-12 strains MG1655 and W3110.</title>
        <authorList>
            <person name="Hayashi K."/>
            <person name="Morooka N."/>
            <person name="Yamamoto Y."/>
            <person name="Fujita K."/>
            <person name="Isono K."/>
            <person name="Choi S."/>
            <person name="Ohtsubo E."/>
            <person name="Baba T."/>
            <person name="Wanner B.L."/>
            <person name="Mori H."/>
            <person name="Horiuchi T."/>
        </authorList>
    </citation>
    <scope>NUCLEOTIDE SEQUENCE [LARGE SCALE GENOMIC DNA]</scope>
    <source>
        <strain>K12 / W3110 / ATCC 27325 / DSM 5911</strain>
    </source>
</reference>
<reference key="5">
    <citation type="journal article" date="1998" name="FEMS Microbiol. Lett.">
        <title>Small genes/gene-products in Escherichia coli K-12.</title>
        <authorList>
            <person name="Wasinger V.C."/>
            <person name="Humphery-Smith I."/>
        </authorList>
    </citation>
    <scope>PROTEIN SEQUENCE OF 1-9</scope>
    <source>
        <strain>K12</strain>
    </source>
</reference>
<reference key="6">
    <citation type="journal article" date="1995" name="Nucleic Acids Res.">
        <title>Detection of new genes in a bacterial genome using Markov models for three gene classes.</title>
        <authorList>
            <person name="Borodovsky M."/>
            <person name="McIninch J."/>
            <person name="Koonin E.V."/>
            <person name="Rudd K.E."/>
            <person name="Medigue C."/>
            <person name="Danchin A."/>
        </authorList>
    </citation>
    <scope>IDENTIFICATION</scope>
</reference>
<evidence type="ECO:0000305" key="1"/>
<proteinExistence type="evidence at protein level"/>
<name>YCIN_ECOLI</name>
<organism>
    <name type="scientific">Escherichia coli (strain K12)</name>
    <dbReference type="NCBI Taxonomy" id="83333"/>
    <lineage>
        <taxon>Bacteria</taxon>
        <taxon>Pseudomonadati</taxon>
        <taxon>Pseudomonadota</taxon>
        <taxon>Gammaproteobacteria</taxon>
        <taxon>Enterobacterales</taxon>
        <taxon>Enterobacteriaceae</taxon>
        <taxon>Escherichia</taxon>
    </lineage>
</organism>
<gene>
    <name type="primary">yciN</name>
    <name type="ordered locus">b1273</name>
    <name type="ordered locus">JW1265</name>
</gene>
<keyword id="KW-0903">Direct protein sequencing</keyword>
<keyword id="KW-1185">Reference proteome</keyword>
<sequence length="83" mass="9386">MNKETQPIDRETLLKEANKIIREHEDTLAGIEATGVTQRNGVLVFTGDYFLDEQGLPTAKSTAVFNMFKHLAHVLSEKYHLVD</sequence>
<feature type="chain" id="PRO_0000168880" description="Protein YciN">
    <location>
        <begin position="1"/>
        <end position="83"/>
    </location>
</feature>
<feature type="sequence conflict" description="In Ref. 1." evidence="1" ref="1">
    <original>LVFTGDYFLDEQGLPTAKSTAVFNMFKHLAHVLSEKYHLVD</original>
    <variation>RYLPATTF</variation>
    <location>
        <begin position="43"/>
        <end position="83"/>
    </location>
</feature>
<dbReference type="EMBL" id="X04475">
    <property type="status" value="NOT_ANNOTATED_CDS"/>
    <property type="molecule type" value="Genomic_DNA"/>
</dbReference>
<dbReference type="EMBL" id="U00096">
    <property type="protein sequence ID" value="AAC74355.1"/>
    <property type="molecule type" value="Genomic_DNA"/>
</dbReference>
<dbReference type="EMBL" id="AP009048">
    <property type="protein sequence ID" value="BAA14810.1"/>
    <property type="molecule type" value="Genomic_DNA"/>
</dbReference>
<dbReference type="PIR" id="D64875">
    <property type="entry name" value="D64875"/>
</dbReference>
<dbReference type="RefSeq" id="NP_415789.1">
    <property type="nucleotide sequence ID" value="NC_000913.3"/>
</dbReference>
<dbReference type="RefSeq" id="WP_001031530.1">
    <property type="nucleotide sequence ID" value="NZ_STEB01000005.1"/>
</dbReference>
<dbReference type="SMR" id="P0AB61"/>
<dbReference type="BioGRID" id="4259578">
    <property type="interactions" value="14"/>
</dbReference>
<dbReference type="DIP" id="DIP-35851N"/>
<dbReference type="FunCoup" id="P0AB61">
    <property type="interactions" value="137"/>
</dbReference>
<dbReference type="IntAct" id="P0AB61">
    <property type="interactions" value="10"/>
</dbReference>
<dbReference type="STRING" id="511145.b1273"/>
<dbReference type="jPOST" id="P0AB61"/>
<dbReference type="PaxDb" id="511145-b1273"/>
<dbReference type="DNASU" id="945860"/>
<dbReference type="EnsemblBacteria" id="AAC74355">
    <property type="protein sequence ID" value="AAC74355"/>
    <property type="gene ID" value="b1273"/>
</dbReference>
<dbReference type="GeneID" id="945860"/>
<dbReference type="KEGG" id="ecj:JW1265"/>
<dbReference type="KEGG" id="eco:b1273"/>
<dbReference type="KEGG" id="ecoc:C3026_07460"/>
<dbReference type="PATRIC" id="fig|1411691.4.peg.1011"/>
<dbReference type="EchoBASE" id="EB2709"/>
<dbReference type="eggNOG" id="ENOG5032SBA">
    <property type="taxonomic scope" value="Bacteria"/>
</dbReference>
<dbReference type="HOGENOM" id="CLU_164128_0_0_6"/>
<dbReference type="InParanoid" id="P0AB61"/>
<dbReference type="OMA" id="DYLHGMV"/>
<dbReference type="OrthoDB" id="6215372at2"/>
<dbReference type="PhylomeDB" id="P0AB61"/>
<dbReference type="BioCyc" id="EcoCyc:EG12868-MONOMER"/>
<dbReference type="PRO" id="PR:P0AB61"/>
<dbReference type="Proteomes" id="UP000000625">
    <property type="component" value="Chromosome"/>
</dbReference>
<dbReference type="GO" id="GO:0005829">
    <property type="term" value="C:cytosol"/>
    <property type="evidence" value="ECO:0000314"/>
    <property type="project" value="EcoCyc"/>
</dbReference>
<dbReference type="FunFam" id="3.30.300.360:FF:000001">
    <property type="entry name" value="DUF2498 family protein"/>
    <property type="match status" value="1"/>
</dbReference>
<dbReference type="Gene3D" id="3.30.300.360">
    <property type="entry name" value="Protein of unknown function (DUF2498)"/>
    <property type="match status" value="1"/>
</dbReference>
<dbReference type="InterPro" id="IPR019633">
    <property type="entry name" value="DUF2498"/>
</dbReference>
<dbReference type="InterPro" id="IPR038191">
    <property type="entry name" value="YciN_sf"/>
</dbReference>
<dbReference type="NCBIfam" id="NF008265">
    <property type="entry name" value="PRK11037.1"/>
    <property type="match status" value="1"/>
</dbReference>
<dbReference type="Pfam" id="PF10692">
    <property type="entry name" value="DUF2498"/>
    <property type="match status" value="1"/>
</dbReference>